<proteinExistence type="evidence at protein level"/>
<gene>
    <name type="primary">fadE28</name>
    <name type="ordered locus">Rv3544c</name>
</gene>
<dbReference type="EC" id="1.3.99.-" evidence="5 6"/>
<dbReference type="EMBL" id="AL123456">
    <property type="protein sequence ID" value="CCP46366.1"/>
    <property type="molecule type" value="Genomic_DNA"/>
</dbReference>
<dbReference type="RefSeq" id="NP_218061.1">
    <property type="nucleotide sequence ID" value="NC_000962.3"/>
</dbReference>
<dbReference type="RefSeq" id="WP_003419299.1">
    <property type="nucleotide sequence ID" value="NZ_NVQJ01000014.1"/>
</dbReference>
<dbReference type="SMR" id="P71857"/>
<dbReference type="FunCoup" id="P71857">
    <property type="interactions" value="1"/>
</dbReference>
<dbReference type="STRING" id="83332.Rv3544c"/>
<dbReference type="PaxDb" id="83332-Rv3544c"/>
<dbReference type="DNASU" id="888091"/>
<dbReference type="GeneID" id="45427528"/>
<dbReference type="GeneID" id="888091"/>
<dbReference type="KEGG" id="mtu:Rv3544c"/>
<dbReference type="KEGG" id="mtv:RVBD_3544c"/>
<dbReference type="PATRIC" id="fig|83332.111.peg.3949"/>
<dbReference type="TubercuList" id="Rv3544c"/>
<dbReference type="eggNOG" id="COG1960">
    <property type="taxonomic scope" value="Bacteria"/>
</dbReference>
<dbReference type="HOGENOM" id="CLU_018204_5_3_11"/>
<dbReference type="InParanoid" id="P71857"/>
<dbReference type="OrthoDB" id="4319499at2"/>
<dbReference type="PhylomeDB" id="P71857"/>
<dbReference type="BioCyc" id="MetaCyc:G185E-7821-MONOMER"/>
<dbReference type="UniPathway" id="UPA01058"/>
<dbReference type="Proteomes" id="UP000001584">
    <property type="component" value="Chromosome"/>
</dbReference>
<dbReference type="GO" id="GO:0003995">
    <property type="term" value="F:acyl-CoA dehydrogenase activity"/>
    <property type="evidence" value="ECO:0000318"/>
    <property type="project" value="GO_Central"/>
</dbReference>
<dbReference type="GO" id="GO:0071949">
    <property type="term" value="F:FAD binding"/>
    <property type="evidence" value="ECO:0000314"/>
    <property type="project" value="UniProtKB"/>
</dbReference>
<dbReference type="GO" id="GO:0051701">
    <property type="term" value="P:biological process involved in interaction with host"/>
    <property type="evidence" value="ECO:0000315"/>
    <property type="project" value="MTBBASE"/>
</dbReference>
<dbReference type="GO" id="GO:0006707">
    <property type="term" value="P:cholesterol catabolic process"/>
    <property type="evidence" value="ECO:0000303"/>
    <property type="project" value="UniProtKB"/>
</dbReference>
<dbReference type="GO" id="GO:0033539">
    <property type="term" value="P:fatty acid beta-oxidation using acyl-CoA dehydrogenase"/>
    <property type="evidence" value="ECO:0000314"/>
    <property type="project" value="UniProtKB"/>
</dbReference>
<dbReference type="GO" id="GO:0009268">
    <property type="term" value="P:response to pH"/>
    <property type="evidence" value="ECO:0000270"/>
    <property type="project" value="MTBBASE"/>
</dbReference>
<dbReference type="FunFam" id="1.20.140.10:FF:000050">
    <property type="entry name" value="Acyl-CoA dehydrogenase FadE28"/>
    <property type="match status" value="1"/>
</dbReference>
<dbReference type="Gene3D" id="1.10.540.10">
    <property type="entry name" value="Acyl-CoA dehydrogenase/oxidase, N-terminal domain"/>
    <property type="match status" value="1"/>
</dbReference>
<dbReference type="Gene3D" id="2.40.110.10">
    <property type="entry name" value="Butyryl-CoA Dehydrogenase, subunit A, domain 2"/>
    <property type="match status" value="1"/>
</dbReference>
<dbReference type="Gene3D" id="1.20.140.10">
    <property type="entry name" value="Butyryl-CoA Dehydrogenase, subunit A, domain 3"/>
    <property type="match status" value="1"/>
</dbReference>
<dbReference type="InterPro" id="IPR046373">
    <property type="entry name" value="Acyl-CoA_Oxase/DH_mid-dom_sf"/>
</dbReference>
<dbReference type="InterPro" id="IPR036250">
    <property type="entry name" value="AcylCo_DH-like_C"/>
</dbReference>
<dbReference type="InterPro" id="IPR009075">
    <property type="entry name" value="AcylCo_DH/oxidase_C"/>
</dbReference>
<dbReference type="InterPro" id="IPR013786">
    <property type="entry name" value="AcylCoA_DH/ox_N"/>
</dbReference>
<dbReference type="InterPro" id="IPR037069">
    <property type="entry name" value="AcylCoA_DH/ox_N_sf"/>
</dbReference>
<dbReference type="InterPro" id="IPR009100">
    <property type="entry name" value="AcylCoA_DH/oxidase_NM_dom_sf"/>
</dbReference>
<dbReference type="PANTHER" id="PTHR43884">
    <property type="entry name" value="ACYL-COA DEHYDROGENASE"/>
    <property type="match status" value="1"/>
</dbReference>
<dbReference type="PANTHER" id="PTHR43884:SF20">
    <property type="entry name" value="ACYL-COA DEHYDROGENASE FADE28"/>
    <property type="match status" value="1"/>
</dbReference>
<dbReference type="Pfam" id="PF00441">
    <property type="entry name" value="Acyl-CoA_dh_1"/>
    <property type="match status" value="1"/>
</dbReference>
<dbReference type="Pfam" id="PF02771">
    <property type="entry name" value="Acyl-CoA_dh_N"/>
    <property type="match status" value="1"/>
</dbReference>
<dbReference type="SUPFAM" id="SSF47203">
    <property type="entry name" value="Acyl-CoA dehydrogenase C-terminal domain-like"/>
    <property type="match status" value="1"/>
</dbReference>
<dbReference type="SUPFAM" id="SSF56645">
    <property type="entry name" value="Acyl-CoA dehydrogenase NM domain-like"/>
    <property type="match status" value="1"/>
</dbReference>
<feature type="chain" id="PRO_0000438517" description="Acyl-CoA dehydrogenase FadE28">
    <location>
        <begin position="1"/>
        <end position="339"/>
    </location>
</feature>
<feature type="binding site" evidence="10">
    <location>
        <position position="227"/>
    </location>
    <ligand>
        <name>FAD</name>
        <dbReference type="ChEBI" id="CHEBI:57692"/>
        <note>ligand shared between dimeric partners</note>
    </ligand>
</feature>
<feature type="binding site" description="in other chain" evidence="10">
    <location>
        <position position="238"/>
    </location>
    <ligand>
        <name>FAD</name>
        <dbReference type="ChEBI" id="CHEBI:57692"/>
        <note>ligand shared between dimeric partners</note>
    </ligand>
</feature>
<feature type="binding site" description="in other chain" evidence="1">
    <location>
        <position position="295"/>
    </location>
    <ligand>
        <name>FAD</name>
        <dbReference type="ChEBI" id="CHEBI:57692"/>
        <note>ligand shared between dimeric partners</note>
    </ligand>
</feature>
<feature type="binding site" description="in other chain" evidence="1">
    <location>
        <position position="299"/>
    </location>
    <ligand>
        <name>FAD</name>
        <dbReference type="ChEBI" id="CHEBI:57692"/>
        <note>ligand shared between dimeric partners</note>
    </ligand>
</feature>
<comment type="function">
    <text evidence="3 4 5 6">Involved in the third cycle of side chain dehydrogenation in the beta-oxidation of cholesterol catabolism (PubMed:26161441). May play an important role for the initial macrophage invasion, possibly in response to the acidification of phagosome (PubMed:18486437). It contributes partly to the virulence by increasing the efficiency of beta-oxidation (PubMed:18486437, PubMed:22045806). Catalyzes the dehydrogenation of 2'-propanoyl-CoA ester side chains of 3-oxo-4-pregnene-20-carboxyl-CoA (3-OPC-CoA) to yield 3-oxo-4,17-pregnadiene-20-carboxyl-CoA (3-OPDC-CoA). Also able to dehydrogenate steroyl-CoA such as 3-oxo-chol-4-en-24-oyl-CoA (3-OCO-CoA), 1beta-(2'-propanoyl-CoA)-3a-alpha-H-7a-beta-methylhexahydro-4-indanone (indanone-CoA ester), hexahydroindanone and pregenenone (PubMed:22045806, PubMed:23560677, PubMed:26161441).</text>
</comment>
<comment type="catalytic activity">
    <reaction evidence="5 6">
        <text>3-oxochol-4-en-22-oyl-CoA + A = 3-oxochola-4,17-dien-22-oyl-CoA + AH2</text>
        <dbReference type="Rhea" id="RHEA:46324"/>
        <dbReference type="ChEBI" id="CHEBI:13193"/>
        <dbReference type="ChEBI" id="CHEBI:17499"/>
        <dbReference type="ChEBI" id="CHEBI:83792"/>
        <dbReference type="ChEBI" id="CHEBI:86020"/>
    </reaction>
</comment>
<comment type="cofactor">
    <cofactor evidence="5">
        <name>FAD</name>
        <dbReference type="ChEBI" id="CHEBI:57692"/>
    </cofactor>
    <text evidence="5">Binds 1 FAD per heterodimer.</text>
</comment>
<comment type="biophysicochemical properties">
    <kinetics>
        <KM evidence="5 6">5.3 uM for 3-OPC-CoA (at pH 8.5 and 25 degrees Celsius)</KM>
        <KM evidence="6">6.5 uM for 3-OCO-CoA (at pH 8.5 and 25 degrees Celsius)</KM>
        <KM evidence="5">86 uM for indanone-CoA ester (at pH 8.5 and 25 degrees Celsius)</KM>
        <text evidence="5 6">kcat is 78 min(-1) for 3-OPC-CoA as substrate (at pH 8.5 and 25 degrees Celsius) (PubMed:23560677). kcat is 5.1 min(-1) for indanone-CoA ester as substrate (at pH 8.5 and 25 degrees Celsius) (PubMed:23560677). kcat is 1.3 sec(-1) for 3-OPC-CoA as substrate (at pH 8.5 and 25 degrees Celsius) (PubMed:26161441). kcat is 0.16 sec(-1) for 3-OCO-CoA as substrate (at pH 8.5 and 25 degrees Celsius) (PubMed:26161441).</text>
    </kinetics>
    <phDependence>
        <text evidence="5">Optimum pH is above 8. No activity is observed under pH 6.</text>
    </phDependence>
</comment>
<comment type="pathway">
    <text evidence="9">Steroid metabolism; cholesterol degradation.</text>
</comment>
<comment type="subunit">
    <text evidence="4 5">Heterotetramer composed of FadE28 and FadE29.</text>
</comment>
<comment type="induction">
    <text evidence="2 3">Induced by cholesterol and repressed by KtsR (PubMed:17635188). Up-regulated in vitro by acid shock and ex vivo by macrophage challenge (PubMed:18486437).</text>
</comment>
<comment type="similarity">
    <text evidence="8">Belongs to the acyl-CoA dehydrogenase family.</text>
</comment>
<protein>
    <recommendedName>
        <fullName evidence="7">Acyl-CoA dehydrogenase FadE28</fullName>
        <shortName evidence="7">ACAD</shortName>
        <ecNumber evidence="5 6">1.3.99.-</ecNumber>
    </recommendedName>
    <alternativeName>
        <fullName evidence="10">3-oxo-23,24-bisnorchol-4-en-22-oyl-CoA dehydrogenase alpha subunit</fullName>
    </alternativeName>
    <alternativeName>
        <fullName evidence="10">3-oxo-4-pregnene-20-carboxyl-CoA dehydrogenase alpha subunit</fullName>
    </alternativeName>
</protein>
<accession>P71857</accession>
<accession>I6YCD6</accession>
<evidence type="ECO:0000250" key="1">
    <source>
        <dbReference type="UniProtKB" id="I6Y3Q0"/>
    </source>
</evidence>
<evidence type="ECO:0000269" key="2">
    <source>
    </source>
</evidence>
<evidence type="ECO:0000269" key="3">
    <source>
    </source>
</evidence>
<evidence type="ECO:0000269" key="4">
    <source>
    </source>
</evidence>
<evidence type="ECO:0000269" key="5">
    <source>
    </source>
</evidence>
<evidence type="ECO:0000269" key="6">
    <source>
    </source>
</evidence>
<evidence type="ECO:0000303" key="7">
    <source>
    </source>
</evidence>
<evidence type="ECO:0000305" key="8"/>
<evidence type="ECO:0000305" key="9">
    <source>
    </source>
</evidence>
<evidence type="ECO:0000305" key="10">
    <source>
    </source>
</evidence>
<sequence length="339" mass="35469">MDFDPTAEQQAVADVVTSVLERDISWEALVCGGVTALPVPERLGGDGVGLFEVGALLTEVGRHGAVTPALATLGLGVVPLLELASAEQQDRFLAGVAKGGVLTAALNEPGAALPDRPATSFVGGRLSGTKVGVGYAEQADWMLVTADNAVVVVSPTADGVRMVRTPTSNGSDEYVMTMDGVAVADCDILADVAAHRVNQLALAVMGAYADGLVAGALRLTADYVANRKQFGKPLSTFQTVAAQLAEVYIASRTIDLVAKSVIWRLAEDLDAGDDLGVLGYWVTSQAPPAMQICHHLHGGMGMDVTYPMHRYYSTIKDLTRLLGGPSHRLELLGARCSLT</sequence>
<keyword id="KW-0153">Cholesterol metabolism</keyword>
<keyword id="KW-0274">FAD</keyword>
<keyword id="KW-0285">Flavoprotein</keyword>
<keyword id="KW-0442">Lipid degradation</keyword>
<keyword id="KW-0443">Lipid metabolism</keyword>
<keyword id="KW-0520">NAD</keyword>
<keyword id="KW-0521">NADP</keyword>
<keyword id="KW-0560">Oxidoreductase</keyword>
<keyword id="KW-1185">Reference proteome</keyword>
<keyword id="KW-0753">Steroid metabolism</keyword>
<keyword id="KW-1207">Sterol metabolism</keyword>
<keyword id="KW-0843">Virulence</keyword>
<reference key="1">
    <citation type="journal article" date="1998" name="Nature">
        <title>Deciphering the biology of Mycobacterium tuberculosis from the complete genome sequence.</title>
        <authorList>
            <person name="Cole S.T."/>
            <person name="Brosch R."/>
            <person name="Parkhill J."/>
            <person name="Garnier T."/>
            <person name="Churcher C.M."/>
            <person name="Harris D.E."/>
            <person name="Gordon S.V."/>
            <person name="Eiglmeier K."/>
            <person name="Gas S."/>
            <person name="Barry C.E. III"/>
            <person name="Tekaia F."/>
            <person name="Badcock K."/>
            <person name="Basham D."/>
            <person name="Brown D."/>
            <person name="Chillingworth T."/>
            <person name="Connor R."/>
            <person name="Davies R.M."/>
            <person name="Devlin K."/>
            <person name="Feltwell T."/>
            <person name="Gentles S."/>
            <person name="Hamlin N."/>
            <person name="Holroyd S."/>
            <person name="Hornsby T."/>
            <person name="Jagels K."/>
            <person name="Krogh A."/>
            <person name="McLean J."/>
            <person name="Moule S."/>
            <person name="Murphy L.D."/>
            <person name="Oliver S."/>
            <person name="Osborne J."/>
            <person name="Quail M.A."/>
            <person name="Rajandream M.A."/>
            <person name="Rogers J."/>
            <person name="Rutter S."/>
            <person name="Seeger K."/>
            <person name="Skelton S."/>
            <person name="Squares S."/>
            <person name="Squares R."/>
            <person name="Sulston J.E."/>
            <person name="Taylor K."/>
            <person name="Whitehead S."/>
            <person name="Barrell B.G."/>
        </authorList>
    </citation>
    <scope>NUCLEOTIDE SEQUENCE [LARGE SCALE GENOMIC DNA]</scope>
    <source>
        <strain>ATCC 25618 / H37Rv</strain>
    </source>
</reference>
<reference key="2">
    <citation type="journal article" date="2007" name="Mol. Microbiol.">
        <title>A highly conserved transcriptional repressor controls a large regulon involved in lipid degradation in Mycobacterium smegmatis and Mycobacterium tuberculosis.</title>
        <authorList>
            <person name="Kendall S.L."/>
            <person name="Withers M."/>
            <person name="Soffair C.N."/>
            <person name="Moreland N.J."/>
            <person name="Gurcha S."/>
            <person name="Sidders B."/>
            <person name="Frita R."/>
            <person name="Ten Bokum A."/>
            <person name="Besra G.S."/>
            <person name="Lott J.S."/>
            <person name="Stoker N.G."/>
        </authorList>
    </citation>
    <scope>INDUCTION</scope>
</reference>
<reference key="3">
    <citation type="journal article" date="2008" name="Microb. Pathog.">
        <title>Differential fadE28 expression associated with phenotypic virulence of Mycobacterium tuberculosis.</title>
        <authorList>
            <person name="Lam T.H."/>
            <person name="Yuen K.Y."/>
            <person name="Ho P.L."/>
            <person name="Wong K.C."/>
            <person name="Leong W.M."/>
            <person name="Law H.K."/>
            <person name="Weng X.H."/>
            <person name="Zhang W.H."/>
            <person name="Chen S."/>
            <person name="Yam W.C."/>
        </authorList>
    </citation>
    <scope>FUNCTION</scope>
    <scope>INDUCTION</scope>
    <source>
        <strain>ATCC 27294 / TMC 102 / H37Rv</strain>
    </source>
</reference>
<reference key="4">
    <citation type="journal article" date="2011" name="J. Biol. Chem.">
        <title>Pathway profiling in Mycobacterium tuberculosis: elucidation of cholesterol-derived catabolite and enzymes that catalyze its metabolism.</title>
        <authorList>
            <person name="Thomas S.T."/>
            <person name="VanderVen B.C."/>
            <person name="Sherman D.R."/>
            <person name="Russell D.G."/>
            <person name="Sampson N.S."/>
        </authorList>
    </citation>
    <scope>FUNCTION</scope>
    <scope>SUBUNIT</scope>
    <scope>PATHWAY</scope>
    <scope>SUBSTRATE SPECIFICITY</scope>
    <source>
        <strain>ATCC 27294 / TMC 102 / H37Rv</strain>
    </source>
</reference>
<reference key="5">
    <citation type="journal article" date="2011" name="Mol. Cell. Proteomics">
        <title>Proteogenomic analysis of Mycobacterium tuberculosis by high resolution mass spectrometry.</title>
        <authorList>
            <person name="Kelkar D.S."/>
            <person name="Kumar D."/>
            <person name="Kumar P."/>
            <person name="Balakrishnan L."/>
            <person name="Muthusamy B."/>
            <person name="Yadav A.K."/>
            <person name="Shrivastava P."/>
            <person name="Marimuthu A."/>
            <person name="Anand S."/>
            <person name="Sundaram H."/>
            <person name="Kingsbury R."/>
            <person name="Harsha H.C."/>
            <person name="Nair B."/>
            <person name="Prasad T.S."/>
            <person name="Chauhan D.S."/>
            <person name="Katoch K."/>
            <person name="Katoch V.M."/>
            <person name="Kumar P."/>
            <person name="Chaerkady R."/>
            <person name="Ramachandran S."/>
            <person name="Dash D."/>
            <person name="Pandey A."/>
        </authorList>
    </citation>
    <scope>IDENTIFICATION BY MASS SPECTROMETRY [LARGE SCALE ANALYSIS]</scope>
    <source>
        <strain>ATCC 25618 / H37Rv</strain>
    </source>
</reference>
<reference key="6">
    <citation type="journal article" date="2013" name="Biochemistry">
        <title>Mycobacterium tuberculosis utilizes a unique heterotetrameric structure for dehydrogenation of the cholesterol side chain.</title>
        <authorList>
            <person name="Thomas S.T."/>
            <person name="Sampson N.S."/>
        </authorList>
    </citation>
    <scope>FUNCTION</scope>
    <scope>CATALYTIC ACTIVITY</scope>
    <scope>BIOPHYSICOCHEMICAL PROPERTIES</scope>
    <scope>COFACTOR</scope>
    <scope>SUBUNIT</scope>
    <scope>SUBSTRATE SPECIFICITY</scope>
</reference>
<reference key="7">
    <citation type="journal article" date="2015" name="ACS Infect. Dis.">
        <title>Unraveling cholesterol catabolism in Mycobacterium tuberculosis: ChsE4-ChsE5 alpha2beta2 acyl-CoA dehydrogenase initiates beta-oxidation of 3-oxo-cholest-4-en-26-oyl CoA.</title>
        <authorList>
            <person name="Yang M."/>
            <person name="Lu R."/>
            <person name="Guja K.E."/>
            <person name="Wipperman M.F."/>
            <person name="St Clair J.R."/>
            <person name="Bonds A.C."/>
            <person name="Garcia-Diaz M."/>
            <person name="Sampson N.S."/>
        </authorList>
    </citation>
    <scope>FUNCTION</scope>
    <scope>CATALYTIC ACTIVITY</scope>
    <scope>BIOPHYSICOCHEMICAL PROPERTIES</scope>
</reference>
<name>CHSE1_MYCTU</name>
<organism>
    <name type="scientific">Mycobacterium tuberculosis (strain ATCC 25618 / H37Rv)</name>
    <dbReference type="NCBI Taxonomy" id="83332"/>
    <lineage>
        <taxon>Bacteria</taxon>
        <taxon>Bacillati</taxon>
        <taxon>Actinomycetota</taxon>
        <taxon>Actinomycetes</taxon>
        <taxon>Mycobacteriales</taxon>
        <taxon>Mycobacteriaceae</taxon>
        <taxon>Mycobacterium</taxon>
        <taxon>Mycobacterium tuberculosis complex</taxon>
    </lineage>
</organism>